<gene>
    <name evidence="1" type="primary">MT-ATP8</name>
    <name type="synonym">ATP8</name>
    <name type="synonym">ATPASE8</name>
    <name type="synonym">MTATP8</name>
</gene>
<proteinExistence type="evidence at protein level"/>
<name>ATP8_SHEEP</name>
<keyword id="KW-0002">3D-structure</keyword>
<keyword id="KW-0007">Acetylation</keyword>
<keyword id="KW-0066">ATP synthesis</keyword>
<keyword id="KW-0138">CF(0)</keyword>
<keyword id="KW-0375">Hydrogen ion transport</keyword>
<keyword id="KW-0406">Ion transport</keyword>
<keyword id="KW-0472">Membrane</keyword>
<keyword id="KW-0496">Mitochondrion</keyword>
<keyword id="KW-1185">Reference proteome</keyword>
<keyword id="KW-0812">Transmembrane</keyword>
<keyword id="KW-1133">Transmembrane helix</keyword>
<keyword id="KW-0813">Transport</keyword>
<geneLocation type="mitochondrion"/>
<reference key="1">
    <citation type="journal article" date="1998" name="J. Mol. Evol.">
        <title>The complete mitochondrial DNA sequence of the domestic sheep (Ovis aries) and comparison with the other major ovine haplotype.</title>
        <authorList>
            <person name="Hiendleder S."/>
            <person name="Lewalski H."/>
            <person name="Wassmuth R."/>
            <person name="Janke A."/>
        </authorList>
    </citation>
    <scope>NUCLEOTIDE SEQUENCE [LARGE SCALE GENOMIC DNA]</scope>
    <source>
        <strain evidence="6">Merinolandschaf</strain>
        <tissue>Liver</tissue>
    </source>
</reference>
<reference key="2">
    <citation type="journal article" date="1998" name="J. Anim. Sci.">
        <title>Rapid communication: nucleotide sequence of porcine and ovine tRNA(Lys) and ATPase8 mitochondrial genes.</title>
        <authorList>
            <person name="Tartaglia M."/>
            <person name="Saulle E."/>
        </authorList>
    </citation>
    <scope>NUCLEOTIDE SEQUENCE [GENOMIC DNA]</scope>
    <source>
        <tissue>Peripheral blood</tissue>
    </source>
</reference>
<evidence type="ECO:0000250" key="1">
    <source>
        <dbReference type="UniProtKB" id="P03928"/>
    </source>
</evidence>
<evidence type="ECO:0000250" key="2">
    <source>
        <dbReference type="UniProtKB" id="P03930"/>
    </source>
</evidence>
<evidence type="ECO:0000250" key="3">
    <source>
        <dbReference type="UniProtKB" id="P19483"/>
    </source>
</evidence>
<evidence type="ECO:0000255" key="4"/>
<evidence type="ECO:0000305" key="5"/>
<evidence type="ECO:0000312" key="6">
    <source>
        <dbReference type="Proteomes" id="UP000002356"/>
    </source>
</evidence>
<evidence type="ECO:0007829" key="7">
    <source>
        <dbReference type="PDB" id="6TT7"/>
    </source>
</evidence>
<comment type="function">
    <text evidence="1 3">Subunit 8, of the mitochondrial membrane ATP synthase complex (F(1)F(0) ATP synthase or Complex V) that produces ATP from ADP in the presence of a proton gradient across the membrane which is generated by electron transport complexes of the respiratory chain. ATP synthase complex consist of a soluble F(1) head domain - the catalytic core - and a membrane F(1) domain - the membrane proton channel. These two domains are linked by a central stalk rotating inside the F(1) region and a stationary peripheral stalk. During catalysis, ATP synthesis in the catalytic domain of F(1) is coupled via a rotary mechanism of the central stalk subunits to proton translocation (By similarity). In vivo, can only synthesize ATP although its ATP hydrolase activity can be activated artificially in vitro (By similarity). Part of the complex F(0) domain (By similarity).</text>
</comment>
<comment type="subunit">
    <text evidence="1">Component of the ATP synthase complex composed at least of ATP5F1A/subunit alpha, ATP5F1B/subunit beta, ATP5MC1/subunit c (homooctomer), MT-ATP6/subunit a, MT-ATP8/subunit 8, ATP5ME/subunit e, ATP5MF/subunit f, ATP5MG/subunit g, ATP5MK/subunit k, ATP5MJ/subunit j, ATP5F1C/subunit gamma, ATP5F1D/subunit delta, ATP5F1E/subunit epsilon, ATP5PF/subunit F6, ATP5PB/subunit b, ATP5PD/subunit d, ATP5PO/subunit OSCP. ATP synthase complex consists of a soluble F(1) head domain (subunits alpha(3) and beta(3)) - the catalytic core - and a membrane F(0) domain - the membrane proton channel (subunits c, a, 8, e, f, g, k and j). These two domains are linked by a central stalk (subunits gamma, delta, and epsilon) rotating inside the F1 region and a stationary peripheral stalk (subunits F6, b, d, and OSCP). Interacts with PRICKLE3.</text>
</comment>
<comment type="subcellular location">
    <subcellularLocation>
        <location>Mitochondrion membrane</location>
        <topology>Single-pass membrane protein</topology>
    </subcellularLocation>
</comment>
<comment type="similarity">
    <text evidence="5">Belongs to the ATPase protein 8 family.</text>
</comment>
<sequence>MPQLDTSTWLTMILSMFLVLFIIFQLKISKHNFYHNPELMTTKTPKQNTPWETKWTKIYLPLSLPL</sequence>
<protein>
    <recommendedName>
        <fullName evidence="1">ATP synthase F(0) complex subunit 8</fullName>
    </recommendedName>
    <alternativeName>
        <fullName>A6L</fullName>
    </alternativeName>
    <alternativeName>
        <fullName>F-ATPase subunit 8</fullName>
    </alternativeName>
</protein>
<dbReference type="EMBL" id="AF010406">
    <property type="protein sequence ID" value="AAD10100.1"/>
    <property type="molecule type" value="Genomic_DNA"/>
</dbReference>
<dbReference type="EMBL" id="AF039171">
    <property type="protein sequence ID" value="AAD05067.1"/>
    <property type="molecule type" value="Genomic_DNA"/>
</dbReference>
<dbReference type="PIR" id="T11054">
    <property type="entry name" value="T11054"/>
</dbReference>
<dbReference type="RefSeq" id="NP_008410.1">
    <property type="nucleotide sequence ID" value="NC_001941.1"/>
</dbReference>
<dbReference type="PDB" id="6TT7">
    <property type="method" value="EM"/>
    <property type="resolution" value="3.50 A"/>
    <property type="chains" value="Q=1-66"/>
</dbReference>
<dbReference type="PDB" id="6ZA9">
    <property type="method" value="EM"/>
    <property type="resolution" value="3.76 A"/>
    <property type="chains" value="Q=1-66"/>
</dbReference>
<dbReference type="PDBsum" id="6TT7"/>
<dbReference type="PDBsum" id="6ZA9"/>
<dbReference type="EMDB" id="EMD-10573"/>
<dbReference type="EMDB" id="EMD-11127"/>
<dbReference type="SMR" id="O78751"/>
<dbReference type="STRING" id="9940.ENSOARP00000000005"/>
<dbReference type="PaxDb" id="9940-ENSOARP00000000005"/>
<dbReference type="Ensembl" id="ENSOART00020046167">
    <property type="protein sequence ID" value="ENSOARP00020060450"/>
    <property type="gene ID" value="ENSOARG00020028106"/>
</dbReference>
<dbReference type="Ensembl" id="ENSOART00025000022">
    <property type="protein sequence ID" value="ENSOARP00025000006"/>
    <property type="gene ID" value="ENSOARG00025000022"/>
</dbReference>
<dbReference type="Ensembl" id="ENSOART00040000022">
    <property type="protein sequence ID" value="ENSOARP00040000006"/>
    <property type="gene ID" value="ENSOARG00040000022"/>
</dbReference>
<dbReference type="Ensembl" id="ENSOART00180000022">
    <property type="protein sequence ID" value="ENSOARP00180000006"/>
    <property type="gene ID" value="ENSOARG00180000022"/>
</dbReference>
<dbReference type="Ensembl" id="ENSOART00185000022">
    <property type="protein sequence ID" value="ENSOARP00185000006"/>
    <property type="gene ID" value="ENSOARG00185000022"/>
</dbReference>
<dbReference type="Ensembl" id="ENSOART00215000022">
    <property type="protein sequence ID" value="ENSOARP00215000006"/>
    <property type="gene ID" value="ENSOARG00215000022"/>
</dbReference>
<dbReference type="Ensembl" id="ENSOART00220000022">
    <property type="protein sequence ID" value="ENSOARP00220000006"/>
    <property type="gene ID" value="ENSOARG00220000022"/>
</dbReference>
<dbReference type="Ensembl" id="ENSOART00225000022">
    <property type="protein sequence ID" value="ENSOARP00225000006"/>
    <property type="gene ID" value="ENSOARG00225000022"/>
</dbReference>
<dbReference type="Ensembl" id="ENSOART00260000022">
    <property type="protein sequence ID" value="ENSOARP00260000006"/>
    <property type="gene ID" value="ENSOARG00260000022"/>
</dbReference>
<dbReference type="GeneID" id="808253"/>
<dbReference type="KEGG" id="oas:808253"/>
<dbReference type="CTD" id="4509"/>
<dbReference type="eggNOG" id="ENOG502T21P">
    <property type="taxonomic scope" value="Eukaryota"/>
</dbReference>
<dbReference type="HOGENOM" id="CLU_2811757_0_0_1"/>
<dbReference type="OMA" id="LDTSTWF"/>
<dbReference type="OrthoDB" id="9835073at2759"/>
<dbReference type="Proteomes" id="UP000002356">
    <property type="component" value="Mitochondrion"/>
</dbReference>
<dbReference type="Bgee" id="ENSOARG00000000021">
    <property type="expression patterns" value="Expressed in cerebellum and 53 other cell types or tissues"/>
</dbReference>
<dbReference type="ExpressionAtlas" id="O78751">
    <property type="expression patterns" value="baseline"/>
</dbReference>
<dbReference type="GO" id="GO:0031966">
    <property type="term" value="C:mitochondrial membrane"/>
    <property type="evidence" value="ECO:0007669"/>
    <property type="project" value="UniProtKB-SubCell"/>
</dbReference>
<dbReference type="GO" id="GO:0045259">
    <property type="term" value="C:proton-transporting ATP synthase complex"/>
    <property type="evidence" value="ECO:0000250"/>
    <property type="project" value="UniProtKB"/>
</dbReference>
<dbReference type="GO" id="GO:0015078">
    <property type="term" value="F:proton transmembrane transporter activity"/>
    <property type="evidence" value="ECO:0007669"/>
    <property type="project" value="InterPro"/>
</dbReference>
<dbReference type="GO" id="GO:0015986">
    <property type="term" value="P:proton motive force-driven ATP synthesis"/>
    <property type="evidence" value="ECO:0007669"/>
    <property type="project" value="InterPro"/>
</dbReference>
<dbReference type="InterPro" id="IPR039017">
    <property type="entry name" value="ATP8_mammal"/>
</dbReference>
<dbReference type="InterPro" id="IPR001421">
    <property type="entry name" value="ATP8_metazoa"/>
</dbReference>
<dbReference type="PANTHER" id="PTHR13722">
    <property type="entry name" value="ATP SYNTHASE PROTEIN 8"/>
    <property type="match status" value="1"/>
</dbReference>
<dbReference type="PANTHER" id="PTHR13722:SF0">
    <property type="entry name" value="ATP SYNTHASE PROTEIN 8"/>
    <property type="match status" value="1"/>
</dbReference>
<dbReference type="Pfam" id="PF00895">
    <property type="entry name" value="ATP-synt_8"/>
    <property type="match status" value="1"/>
</dbReference>
<accession>O78751</accession>
<accession>O99388</accession>
<feature type="chain" id="PRO_0000195587" description="ATP synthase F(0) complex subunit 8">
    <location>
        <begin position="1"/>
        <end position="66"/>
    </location>
</feature>
<feature type="transmembrane region" description="Helical" evidence="4">
    <location>
        <begin position="8"/>
        <end position="24"/>
    </location>
</feature>
<feature type="modified residue" description="N6-acetyllysine; alternate" evidence="2">
    <location>
        <position position="54"/>
    </location>
</feature>
<feature type="modified residue" description="N6-succinyllysine; alternate" evidence="2">
    <location>
        <position position="54"/>
    </location>
</feature>
<feature type="modified residue" description="N6-acetyllysine" evidence="2">
    <location>
        <position position="57"/>
    </location>
</feature>
<feature type="sequence conflict" description="In Ref. 2; AAD05067." evidence="5" ref="2">
    <original>I</original>
    <variation>V</variation>
    <location>
        <position position="23"/>
    </location>
</feature>
<feature type="sequence conflict" description="In Ref. 2; AAD05067." evidence="5" ref="2">
    <original>HN</original>
    <variation>YS</variation>
    <location>
        <begin position="35"/>
        <end position="36"/>
    </location>
</feature>
<feature type="sequence conflict" description="In Ref. 2; AAD05067." evidence="5" ref="2">
    <original>T</original>
    <variation>M</variation>
    <location>
        <position position="44"/>
    </location>
</feature>
<feature type="helix" evidence="7">
    <location>
        <begin position="2"/>
        <end position="4"/>
    </location>
</feature>
<feature type="helix" evidence="7">
    <location>
        <begin position="9"/>
        <end position="19"/>
    </location>
</feature>
<feature type="helix" evidence="7">
    <location>
        <begin position="22"/>
        <end position="29"/>
    </location>
</feature>
<organism>
    <name type="scientific">Ovis aries</name>
    <name type="common">Sheep</name>
    <dbReference type="NCBI Taxonomy" id="9940"/>
    <lineage>
        <taxon>Eukaryota</taxon>
        <taxon>Metazoa</taxon>
        <taxon>Chordata</taxon>
        <taxon>Craniata</taxon>
        <taxon>Vertebrata</taxon>
        <taxon>Euteleostomi</taxon>
        <taxon>Mammalia</taxon>
        <taxon>Eutheria</taxon>
        <taxon>Laurasiatheria</taxon>
        <taxon>Artiodactyla</taxon>
        <taxon>Ruminantia</taxon>
        <taxon>Pecora</taxon>
        <taxon>Bovidae</taxon>
        <taxon>Caprinae</taxon>
        <taxon>Ovis</taxon>
    </lineage>
</organism>